<name>NDBT1_MESPU</name>
<evidence type="ECO:0000255" key="1"/>
<evidence type="ECO:0000269" key="2">
    <source>
    </source>
</evidence>
<evidence type="ECO:0000303" key="3">
    <source>
    </source>
</evidence>
<evidence type="ECO:0000305" key="4"/>
<evidence type="ECO:0000305" key="5">
    <source>
    </source>
</evidence>
<accession>P0DRH3</accession>
<organism>
    <name type="scientific">Mesomexovis punctatus</name>
    <name type="common">Scorpion</name>
    <name type="synonym">Vaejovis punctatus</name>
    <dbReference type="NCBI Taxonomy" id="1532993"/>
    <lineage>
        <taxon>Eukaryota</taxon>
        <taxon>Metazoa</taxon>
        <taxon>Ecdysozoa</taxon>
        <taxon>Arthropoda</taxon>
        <taxon>Chelicerata</taxon>
        <taxon>Arachnida</taxon>
        <taxon>Scorpiones</taxon>
        <taxon>Iurida</taxon>
        <taxon>Chactoidea</taxon>
        <taxon>Vaejovidae</taxon>
        <taxon>Mesomexovis</taxon>
    </lineage>
</organism>
<feature type="signal peptide" evidence="1">
    <location>
        <begin position="1"/>
        <end position="23"/>
    </location>
</feature>
<feature type="peptide" id="PRO_0000461836" description="Antimicrobial peptide VpCT1" evidence="5">
    <location>
        <begin position="24"/>
        <end position="36"/>
    </location>
</feature>
<feature type="propeptide" id="PRO_0000461837" evidence="5">
    <location>
        <begin position="37"/>
        <end position="70"/>
    </location>
</feature>
<feature type="modified residue" description="Leucine amide" evidence="5">
    <location>
        <position position="36"/>
    </location>
</feature>
<keyword id="KW-0027">Amidation</keyword>
<keyword id="KW-0044">Antibiotic</keyword>
<keyword id="KW-0929">Antimicrobial</keyword>
<keyword id="KW-0165">Cleavage on pair of basic residues</keyword>
<keyword id="KW-0204">Cytolysis</keyword>
<keyword id="KW-0295">Fungicide</keyword>
<keyword id="KW-0472">Membrane</keyword>
<keyword id="KW-0964">Secreted</keyword>
<keyword id="KW-0732">Signal</keyword>
<keyword id="KW-1052">Target cell membrane</keyword>
<keyword id="KW-1053">Target membrane</keyword>
<sequence length="70" mass="8092">MKNQFAVLLVALVLLQLFSQSEAFWSTLLSIGKSLLGKRGLRNFDLEQMDDTYEPELSEADLRYLQDLLR</sequence>
<protein>
    <recommendedName>
        <fullName evidence="3">Antimicrobial peptide VpCT1</fullName>
    </recommendedName>
</protein>
<dbReference type="EMBL" id="JZ818432">
    <property type="status" value="NOT_ANNOTATED_CDS"/>
    <property type="molecule type" value="mRNA"/>
</dbReference>
<dbReference type="GO" id="GO:0005576">
    <property type="term" value="C:extracellular region"/>
    <property type="evidence" value="ECO:0007669"/>
    <property type="project" value="UniProtKB-SubCell"/>
</dbReference>
<dbReference type="GO" id="GO:0016020">
    <property type="term" value="C:membrane"/>
    <property type="evidence" value="ECO:0007669"/>
    <property type="project" value="UniProtKB-KW"/>
</dbReference>
<dbReference type="GO" id="GO:0044218">
    <property type="term" value="C:other organism cell membrane"/>
    <property type="evidence" value="ECO:0007669"/>
    <property type="project" value="UniProtKB-KW"/>
</dbReference>
<dbReference type="GO" id="GO:0042742">
    <property type="term" value="P:defense response to bacterium"/>
    <property type="evidence" value="ECO:0007669"/>
    <property type="project" value="UniProtKB-KW"/>
</dbReference>
<dbReference type="GO" id="GO:0050832">
    <property type="term" value="P:defense response to fungus"/>
    <property type="evidence" value="ECO:0007669"/>
    <property type="project" value="UniProtKB-KW"/>
</dbReference>
<dbReference type="GO" id="GO:0031640">
    <property type="term" value="P:killing of cells of another organism"/>
    <property type="evidence" value="ECO:0007669"/>
    <property type="project" value="UniProtKB-KW"/>
</dbReference>
<proteinExistence type="evidence at protein level"/>
<comment type="function">
    <text evidence="2">Antimicrobial peptide with potent activity against bacteria S.aureus (MIC=4.7 uM) and E.coli (MIC=31.5 uM), and pathogenic yeasts C.albicans (MIC=25 uM) and C.glabrata (MIC=12.5 uM). Is not very effective against P.aeruginosa (MIC=150 and &gt;300 uM). Also provokes moderate hemolysis on human erythrocytes (HC(50)=10.5 uM).</text>
</comment>
<comment type="subcellular location">
    <subcellularLocation>
        <location evidence="5">Secreted</location>
    </subcellularLocation>
    <subcellularLocation>
        <location evidence="5">Target cell membrane</location>
    </subcellularLocation>
</comment>
<comment type="tissue specificity">
    <text evidence="5">Expressed by the venom gland.</text>
</comment>
<comment type="similarity">
    <text evidence="4">Belongs to the non-disulfide-bridged peptide (NDBP) superfamily. Short antimicrobial peptide (group 4) family.</text>
</comment>
<comment type="caution">
    <text evidence="4">Jimenez-Vargas et al. (2021) report this protein originates from Mesomexovis variegatus, while Quintero-Hernandez et al. (2015) sequenced it from Vaejovis punctatus. This discrepancy may stem from taxonomic history: V.punctatus was previously classified as V.punctatus variegatus Pocock, 1898. It should be noted that Mesomexovis variegatus and Mesomexovis punctatus represent two distinct species.</text>
</comment>
<reference key="1">
    <citation type="journal article" date="2015" name="PLoS ONE">
        <title>Transcriptome analysis of scorpion species belonging to the Vaejovis genus.</title>
        <authorList>
            <person name="Quintero-Hernandez V."/>
            <person name="Ramirez-Carreto S."/>
            <person name="Romero-Gutierrez M.T."/>
            <person name="Valdez-Velazquez L.L."/>
            <person name="Becerril B."/>
            <person name="Possani L.D."/>
            <person name="Ortiz E."/>
        </authorList>
    </citation>
    <scope>NUCLEOTIDE SEQUENCE [MRNA]</scope>
    <scope>PROBABLE AMIDATION AT LEU-36</scope>
    <source>
        <tissue>Venom gland</tissue>
    </source>
</reference>
<reference key="2">
    <citation type="journal article" date="2021" name="Peptides">
        <title>Structural and functional characterization of NDBP-4 family antimicrobial peptides from the scorpion Mesomexovis variegatus.</title>
        <authorList>
            <person name="Jimenez-Vargas J.M."/>
            <person name="Ramirez-Carreto S."/>
            <person name="Corzo G."/>
            <person name="Possani L.D."/>
            <person name="Becerril B."/>
            <person name="Ortiz E."/>
        </authorList>
    </citation>
    <scope>FUNCTION</scope>
    <scope>SYNTHESIS OF 24-36</scope>
</reference>